<comment type="function">
    <text evidence="1">Nucleotidase that shows phosphatase activity on nucleoside 5'-monophosphates.</text>
</comment>
<comment type="catalytic activity">
    <reaction evidence="1">
        <text>a ribonucleoside 5'-phosphate + H2O = a ribonucleoside + phosphate</text>
        <dbReference type="Rhea" id="RHEA:12484"/>
        <dbReference type="ChEBI" id="CHEBI:15377"/>
        <dbReference type="ChEBI" id="CHEBI:18254"/>
        <dbReference type="ChEBI" id="CHEBI:43474"/>
        <dbReference type="ChEBI" id="CHEBI:58043"/>
        <dbReference type="EC" id="3.1.3.5"/>
    </reaction>
</comment>
<comment type="cofactor">
    <cofactor evidence="1">
        <name>a divalent metal cation</name>
        <dbReference type="ChEBI" id="CHEBI:60240"/>
    </cofactor>
    <text evidence="1">Binds 1 divalent metal cation per subunit.</text>
</comment>
<comment type="subcellular location">
    <subcellularLocation>
        <location evidence="1">Cytoplasm</location>
    </subcellularLocation>
</comment>
<comment type="similarity">
    <text evidence="1">Belongs to the SurE nucleotidase family.</text>
</comment>
<sequence length="269" mass="29451">MKPLNILISNDDGVFAAGIRALAKSAQKRGHKVKVVCPDQERSATGHGLTLQSPLRVEKADELFGDGIEAWGCSGTPADCVKLALSELLDNKPDLILSGINHGPNLGTDIFCSGTVAAAMEGTLENVPSMAISVASFKWKNFEYAGEIAINIAEQAINDNWPASLLLNLNIPPCAKSKIKELSWTRLSVRKYKNQFSKREDPRGDDYYWLAGEVVLDLKSKGYGPKNWPSDVSQIQNNKISLTPVEPDLFWRGNLDDLPKINNSFVNPS</sequence>
<protein>
    <recommendedName>
        <fullName evidence="1">5'-nucleotidase SurE</fullName>
        <ecNumber evidence="1">3.1.3.5</ecNumber>
    </recommendedName>
    <alternativeName>
        <fullName evidence="1">Nucleoside 5'-monophosphate phosphohydrolase</fullName>
    </alternativeName>
</protein>
<keyword id="KW-0963">Cytoplasm</keyword>
<keyword id="KW-0378">Hydrolase</keyword>
<keyword id="KW-0479">Metal-binding</keyword>
<keyword id="KW-0547">Nucleotide-binding</keyword>
<keyword id="KW-1185">Reference proteome</keyword>
<gene>
    <name evidence="1" type="primary">surE</name>
    <name type="ordered locus">P9301_14561</name>
</gene>
<proteinExistence type="inferred from homology"/>
<organism>
    <name type="scientific">Prochlorococcus marinus (strain MIT 9301)</name>
    <dbReference type="NCBI Taxonomy" id="167546"/>
    <lineage>
        <taxon>Bacteria</taxon>
        <taxon>Bacillati</taxon>
        <taxon>Cyanobacteriota</taxon>
        <taxon>Cyanophyceae</taxon>
        <taxon>Synechococcales</taxon>
        <taxon>Prochlorococcaceae</taxon>
        <taxon>Prochlorococcus</taxon>
    </lineage>
</organism>
<accession>A3PEA4</accession>
<name>SURE_PROM0</name>
<dbReference type="EC" id="3.1.3.5" evidence="1"/>
<dbReference type="EMBL" id="CP000576">
    <property type="protein sequence ID" value="ABO18079.1"/>
    <property type="molecule type" value="Genomic_DNA"/>
</dbReference>
<dbReference type="RefSeq" id="WP_011863388.1">
    <property type="nucleotide sequence ID" value="NC_009091.1"/>
</dbReference>
<dbReference type="SMR" id="A3PEA4"/>
<dbReference type="STRING" id="167546.P9301_14561"/>
<dbReference type="KEGG" id="pmg:P9301_14561"/>
<dbReference type="eggNOG" id="COG0496">
    <property type="taxonomic scope" value="Bacteria"/>
</dbReference>
<dbReference type="HOGENOM" id="CLU_045192_1_3_3"/>
<dbReference type="OrthoDB" id="9780815at2"/>
<dbReference type="Proteomes" id="UP000001430">
    <property type="component" value="Chromosome"/>
</dbReference>
<dbReference type="GO" id="GO:0005737">
    <property type="term" value="C:cytoplasm"/>
    <property type="evidence" value="ECO:0007669"/>
    <property type="project" value="UniProtKB-SubCell"/>
</dbReference>
<dbReference type="GO" id="GO:0008254">
    <property type="term" value="F:3'-nucleotidase activity"/>
    <property type="evidence" value="ECO:0007669"/>
    <property type="project" value="TreeGrafter"/>
</dbReference>
<dbReference type="GO" id="GO:0008253">
    <property type="term" value="F:5'-nucleotidase activity"/>
    <property type="evidence" value="ECO:0007669"/>
    <property type="project" value="UniProtKB-UniRule"/>
</dbReference>
<dbReference type="GO" id="GO:0004309">
    <property type="term" value="F:exopolyphosphatase activity"/>
    <property type="evidence" value="ECO:0007669"/>
    <property type="project" value="TreeGrafter"/>
</dbReference>
<dbReference type="GO" id="GO:0046872">
    <property type="term" value="F:metal ion binding"/>
    <property type="evidence" value="ECO:0007669"/>
    <property type="project" value="UniProtKB-UniRule"/>
</dbReference>
<dbReference type="GO" id="GO:0000166">
    <property type="term" value="F:nucleotide binding"/>
    <property type="evidence" value="ECO:0007669"/>
    <property type="project" value="UniProtKB-KW"/>
</dbReference>
<dbReference type="Gene3D" id="3.40.1210.10">
    <property type="entry name" value="Survival protein SurE-like phosphatase/nucleotidase"/>
    <property type="match status" value="1"/>
</dbReference>
<dbReference type="HAMAP" id="MF_00060">
    <property type="entry name" value="SurE"/>
    <property type="match status" value="1"/>
</dbReference>
<dbReference type="InterPro" id="IPR030048">
    <property type="entry name" value="SurE"/>
</dbReference>
<dbReference type="InterPro" id="IPR002828">
    <property type="entry name" value="SurE-like_Pase/nucleotidase"/>
</dbReference>
<dbReference type="InterPro" id="IPR036523">
    <property type="entry name" value="SurE-like_sf"/>
</dbReference>
<dbReference type="NCBIfam" id="NF001490">
    <property type="entry name" value="PRK00346.1-4"/>
    <property type="match status" value="1"/>
</dbReference>
<dbReference type="NCBIfam" id="NF001492">
    <property type="entry name" value="PRK00346.2-2"/>
    <property type="match status" value="1"/>
</dbReference>
<dbReference type="NCBIfam" id="TIGR00087">
    <property type="entry name" value="surE"/>
    <property type="match status" value="1"/>
</dbReference>
<dbReference type="PANTHER" id="PTHR30457">
    <property type="entry name" value="5'-NUCLEOTIDASE SURE"/>
    <property type="match status" value="1"/>
</dbReference>
<dbReference type="PANTHER" id="PTHR30457:SF12">
    <property type="entry name" value="5'_3'-NUCLEOTIDASE SURE"/>
    <property type="match status" value="1"/>
</dbReference>
<dbReference type="Pfam" id="PF01975">
    <property type="entry name" value="SurE"/>
    <property type="match status" value="1"/>
</dbReference>
<dbReference type="SUPFAM" id="SSF64167">
    <property type="entry name" value="SurE-like"/>
    <property type="match status" value="1"/>
</dbReference>
<feature type="chain" id="PRO_1000007761" description="5'-nucleotidase SurE">
    <location>
        <begin position="1"/>
        <end position="269"/>
    </location>
</feature>
<feature type="binding site" evidence="1">
    <location>
        <position position="11"/>
    </location>
    <ligand>
        <name>a divalent metal cation</name>
        <dbReference type="ChEBI" id="CHEBI:60240"/>
    </ligand>
</feature>
<feature type="binding site" evidence="1">
    <location>
        <position position="12"/>
    </location>
    <ligand>
        <name>a divalent metal cation</name>
        <dbReference type="ChEBI" id="CHEBI:60240"/>
    </ligand>
</feature>
<feature type="binding site" evidence="1">
    <location>
        <position position="43"/>
    </location>
    <ligand>
        <name>a divalent metal cation</name>
        <dbReference type="ChEBI" id="CHEBI:60240"/>
    </ligand>
</feature>
<feature type="binding site" evidence="1">
    <location>
        <position position="101"/>
    </location>
    <ligand>
        <name>a divalent metal cation</name>
        <dbReference type="ChEBI" id="CHEBI:60240"/>
    </ligand>
</feature>
<reference key="1">
    <citation type="journal article" date="2007" name="PLoS Genet.">
        <title>Patterns and implications of gene gain and loss in the evolution of Prochlorococcus.</title>
        <authorList>
            <person name="Kettler G.C."/>
            <person name="Martiny A.C."/>
            <person name="Huang K."/>
            <person name="Zucker J."/>
            <person name="Coleman M.L."/>
            <person name="Rodrigue S."/>
            <person name="Chen F."/>
            <person name="Lapidus A."/>
            <person name="Ferriera S."/>
            <person name="Johnson J."/>
            <person name="Steglich C."/>
            <person name="Church G.M."/>
            <person name="Richardson P."/>
            <person name="Chisholm S.W."/>
        </authorList>
    </citation>
    <scope>NUCLEOTIDE SEQUENCE [LARGE SCALE GENOMIC DNA]</scope>
    <source>
        <strain>MIT 9301</strain>
    </source>
</reference>
<evidence type="ECO:0000255" key="1">
    <source>
        <dbReference type="HAMAP-Rule" id="MF_00060"/>
    </source>
</evidence>